<proteinExistence type="evidence at protein level"/>
<protein>
    <recommendedName>
        <fullName>Arsenical-resistance protein Acr3</fullName>
    </recommendedName>
</protein>
<accession>Q8NQC8</accession>
<accession>Q6M576</accession>
<reference key="1">
    <citation type="journal article" date="2003" name="Appl. Microbiol. Biotechnol.">
        <title>The Corynebacterium glutamicum genome: features and impacts on biotechnological processes.</title>
        <authorList>
            <person name="Ikeda M."/>
            <person name="Nakagawa S."/>
        </authorList>
    </citation>
    <scope>NUCLEOTIDE SEQUENCE [LARGE SCALE GENOMIC DNA]</scope>
    <source>
        <strain>ATCC 13032 / DSM 20300 / JCM 1318 / BCRC 11384 / CCUG 27702 / LMG 3730 / NBRC 12168 / NCIMB 10025 / NRRL B-2784 / 534</strain>
    </source>
</reference>
<reference key="2">
    <citation type="journal article" date="2003" name="J. Biotechnol.">
        <title>The complete Corynebacterium glutamicum ATCC 13032 genome sequence and its impact on the production of L-aspartate-derived amino acids and vitamins.</title>
        <authorList>
            <person name="Kalinowski J."/>
            <person name="Bathe B."/>
            <person name="Bartels D."/>
            <person name="Bischoff N."/>
            <person name="Bott M."/>
            <person name="Burkovski A."/>
            <person name="Dusch N."/>
            <person name="Eggeling L."/>
            <person name="Eikmanns B.J."/>
            <person name="Gaigalat L."/>
            <person name="Goesmann A."/>
            <person name="Hartmann M."/>
            <person name="Huthmacher K."/>
            <person name="Kraemer R."/>
            <person name="Linke B."/>
            <person name="McHardy A.C."/>
            <person name="Meyer F."/>
            <person name="Moeckel B."/>
            <person name="Pfefferle W."/>
            <person name="Puehler A."/>
            <person name="Rey D.A."/>
            <person name="Rueckert C."/>
            <person name="Rupp O."/>
            <person name="Sahm H."/>
            <person name="Wendisch V.F."/>
            <person name="Wiegraebe I."/>
            <person name="Tauch A."/>
        </authorList>
    </citation>
    <scope>NUCLEOTIDE SEQUENCE [LARGE SCALE GENOMIC DNA]</scope>
    <source>
        <strain>ATCC 13032 / DSM 20300 / JCM 1318 / BCRC 11384 / CCUG 27702 / LMG 3730 / NBRC 12168 / NCIMB 10025 / NRRL B-2784 / 534</strain>
    </source>
</reference>
<reference key="3">
    <citation type="journal article" date="2009" name="J. Biol. Chem.">
        <title>Properties of arsenite efflux permeases (Acr3) from Alkaliphilus metalliredigens and Corynebacterium glutamicum.</title>
        <authorList>
            <person name="Fu H.L."/>
            <person name="Meng Y."/>
            <person name="Ordonez E."/>
            <person name="Villadangos A.F."/>
            <person name="Bhattacharjee H."/>
            <person name="Gil J.A."/>
            <person name="Mateos L.M."/>
            <person name="Rosen B.P."/>
        </authorList>
    </citation>
    <scope>FUNCTION</scope>
    <scope>MUTAGENESIS OF CYS-129 AND CYS-141</scope>
    <source>
        <strain>ATCC 13032 / DSM 20300 / JCM 1318 / BCRC 11384 / CCUG 27702 / LMG 3730 / NBRC 12168 / NCIMB 10025 / NRRL B-2784 / 534</strain>
    </source>
</reference>
<reference key="4">
    <citation type="journal article" date="2012" name="J. Biol. Chem.">
        <title>Efflux permease CgAcr3-1 of Corynebacterium glutamicum is an arsenite-specific antiporter.</title>
        <authorList>
            <person name="Villadangos A.F."/>
            <person name="Fu H.L."/>
            <person name="Gil J.A."/>
            <person name="Messens J."/>
            <person name="Rosen B.P."/>
            <person name="Mateos L.M."/>
        </authorList>
    </citation>
    <scope>FUNCTION</scope>
    <scope>ACTIVITY REGULATION</scope>
    <scope>MUTAGENESIS OF LYS-72; CYS-129; ARG-210; THR-241; GLU-305 AND GLU-332</scope>
    <source>
        <strain>ATCC 13032 / DSM 20300 / JCM 1318 / BCRC 11384 / CCUG 27702 / LMG 3730 / NBRC 12168 / NCIMB 10025 / NRRL B-2784 / 534</strain>
    </source>
</reference>
<sequence length="370" mass="40011">MTNSTQTRAKPARISFLDKYIPLWIILAMAFGLFLGRSVSGLSGFLGAMEVGGISLPIALGLLVMMYPPLAKVRYDKTKQIATDKHLMGVSLILNWVVGPALMFALAWLFLPDQPELRTGLIIVGLARCIAMVLVWSDMSCGDREATAVLVAINSVFQVAMFGALGWFYLQVLPSWLGLPTTTAQFSFWSIVTSVLVFLGIPLLAGVFSRIIGEKIKGREWYEQKFLPAISPFALIGLLYTIVLLFSLQGDQIVSQPWAVVRLAIPLVIYFVGMFFISLIASKLSGMNYAKSASVSFTAAGNNFELAIAVSIGTFGATSAQAMAGTIGPLIEIPVLVGLVYAMLWLGPKLFPNDPTLPSSARSTSQIINS</sequence>
<feature type="chain" id="PRO_0000430361" description="Arsenical-resistance protein Acr3">
    <location>
        <begin position="1"/>
        <end position="370"/>
    </location>
</feature>
<feature type="topological domain" description="Cytoplasmic" evidence="1">
    <location>
        <begin position="1"/>
        <end position="15"/>
    </location>
</feature>
<feature type="transmembrane region" description="Helical" evidence="1">
    <location>
        <begin position="16"/>
        <end position="36"/>
    </location>
</feature>
<feature type="topological domain" description="Extracellular" evidence="1">
    <location>
        <begin position="37"/>
        <end position="44"/>
    </location>
</feature>
<feature type="transmembrane region" description="Helical" evidence="1">
    <location>
        <begin position="45"/>
        <end position="65"/>
    </location>
</feature>
<feature type="topological domain" description="Cytoplasmic" evidence="1">
    <location>
        <begin position="66"/>
        <end position="91"/>
    </location>
</feature>
<feature type="transmembrane region" description="Helical" evidence="1">
    <location>
        <begin position="92"/>
        <end position="112"/>
    </location>
</feature>
<feature type="topological domain" description="Extracellular" evidence="1">
    <location>
        <begin position="113"/>
        <end position="118"/>
    </location>
</feature>
<feature type="transmembrane region" description="Helical" evidence="1">
    <location>
        <begin position="119"/>
        <end position="139"/>
    </location>
</feature>
<feature type="topological domain" description="Cytoplasmic" evidence="1">
    <location>
        <begin position="140"/>
        <end position="147"/>
    </location>
</feature>
<feature type="transmembrane region" description="Helical" evidence="1">
    <location>
        <begin position="148"/>
        <end position="168"/>
    </location>
</feature>
<feature type="topological domain" description="Extracellular" evidence="1">
    <location>
        <begin position="169"/>
        <end position="187"/>
    </location>
</feature>
<feature type="transmembrane region" description="Helical" evidence="1">
    <location>
        <begin position="188"/>
        <end position="208"/>
    </location>
</feature>
<feature type="topological domain" description="Cytoplasmic" evidence="1">
    <location>
        <begin position="209"/>
        <end position="225"/>
    </location>
</feature>
<feature type="transmembrane region" description="Helical" evidence="1">
    <location>
        <begin position="226"/>
        <end position="246"/>
    </location>
</feature>
<feature type="topological domain" description="Extracellular" evidence="1">
    <location>
        <begin position="247"/>
        <end position="259"/>
    </location>
</feature>
<feature type="transmembrane region" description="Helical" evidence="1">
    <location>
        <begin position="260"/>
        <end position="280"/>
    </location>
</feature>
<feature type="topological domain" description="Cytoplasmic" evidence="1">
    <location>
        <begin position="281"/>
        <end position="303"/>
    </location>
</feature>
<feature type="transmembrane region" description="Helical" evidence="1">
    <location>
        <begin position="304"/>
        <end position="324"/>
    </location>
</feature>
<feature type="topological domain" description="Extracellular" evidence="1">
    <location>
        <begin position="325"/>
        <end position="326"/>
    </location>
</feature>
<feature type="transmembrane region" description="Helical" evidence="1">
    <location>
        <begin position="327"/>
        <end position="347"/>
    </location>
</feature>
<feature type="topological domain" description="Cytoplasmic" evidence="1">
    <location>
        <begin position="348"/>
        <end position="370"/>
    </location>
</feature>
<feature type="mutagenesis site" description="Decrease in transport activity." evidence="3">
    <original>K</original>
    <variation>A</variation>
    <location>
        <position position="72"/>
    </location>
</feature>
<feature type="mutagenesis site" description="Loss of transport activity." evidence="2 3">
    <original>C</original>
    <variation>A</variation>
    <variation>S</variation>
    <location>
        <position position="129"/>
    </location>
</feature>
<feature type="mutagenesis site" description="Does not affect transport activity." evidence="2">
    <original>C</original>
    <variation>S</variation>
    <location>
        <position position="141"/>
    </location>
</feature>
<feature type="mutagenesis site" description="Decrease in transport activity." evidence="3">
    <original>R</original>
    <variation>A</variation>
    <location>
        <position position="210"/>
    </location>
</feature>
<feature type="mutagenesis site" description="Does not affect transport activity." evidence="3">
    <original>T</original>
    <variation>A</variation>
    <location>
        <position position="241"/>
    </location>
</feature>
<feature type="mutagenesis site" description="Loss of transport activity." evidence="3">
    <original>E</original>
    <variation>A</variation>
    <variation>D</variation>
    <variation>F</variation>
    <variation>K</variation>
    <location>
        <position position="305"/>
    </location>
</feature>
<feature type="mutagenesis site" description="Decrease in transport activity." evidence="3">
    <original>E</original>
    <variation>A</variation>
    <location>
        <position position="332"/>
    </location>
</feature>
<gene>
    <name type="primary">acr3</name>
    <name type="synonym">arsC2</name>
    <name type="ordered locus">Cgl1510</name>
    <name type="ordered locus">cg1705</name>
</gene>
<organism>
    <name type="scientific">Corynebacterium glutamicum (strain ATCC 13032 / DSM 20300 / JCM 1318 / BCRC 11384 / CCUG 27702 / LMG 3730 / NBRC 12168 / NCIMB 10025 / NRRL B-2784 / 534)</name>
    <dbReference type="NCBI Taxonomy" id="196627"/>
    <lineage>
        <taxon>Bacteria</taxon>
        <taxon>Bacillati</taxon>
        <taxon>Actinomycetota</taxon>
        <taxon>Actinomycetes</taxon>
        <taxon>Mycobacteriales</taxon>
        <taxon>Corynebacteriaceae</taxon>
        <taxon>Corynebacterium</taxon>
    </lineage>
</organism>
<comment type="function">
    <text evidence="2 3">Catalyzes the proton motive force-dependent arsenite efflux from the cell. Probably functions as an arsenite/H(+) antiporter. Does not transport antimonite.</text>
</comment>
<comment type="activity regulation">
    <text evidence="3">Inhibited by carbonyl cyanide m-chlorophenylhydrazone (CCCP).</text>
</comment>
<comment type="subcellular location">
    <subcellularLocation>
        <location evidence="4">Cell membrane</location>
        <topology evidence="4">Multi-pass membrane protein</topology>
    </subcellularLocation>
</comment>
<comment type="similarity">
    <text evidence="4">Belongs to the arsenical resistance-3 (ACR3) (TC 2.A.59) family.</text>
</comment>
<comment type="sequence caution" evidence="4">
    <conflict type="erroneous initiation">
        <sequence resource="EMBL-CDS" id="BAB98903"/>
    </conflict>
    <text>Extended N-terminus.</text>
</comment>
<evidence type="ECO:0000255" key="1"/>
<evidence type="ECO:0000269" key="2">
    <source>
    </source>
</evidence>
<evidence type="ECO:0000269" key="3">
    <source>
    </source>
</evidence>
<evidence type="ECO:0000305" key="4"/>
<dbReference type="EMBL" id="BA000036">
    <property type="protein sequence ID" value="BAB98903.1"/>
    <property type="status" value="ALT_INIT"/>
    <property type="molecule type" value="Genomic_DNA"/>
</dbReference>
<dbReference type="EMBL" id="BX927152">
    <property type="protein sequence ID" value="CAF21519.1"/>
    <property type="molecule type" value="Genomic_DNA"/>
</dbReference>
<dbReference type="RefSeq" id="NP_600726.2">
    <property type="nucleotide sequence ID" value="NC_003450.3"/>
</dbReference>
<dbReference type="SMR" id="Q8NQC8"/>
<dbReference type="STRING" id="196627.cg1705"/>
<dbReference type="TCDB" id="2.A.59.1.7">
    <property type="family name" value="the arsenical resistance-3 (acr3) family"/>
</dbReference>
<dbReference type="DNASU" id="1019483"/>
<dbReference type="KEGG" id="cgb:cg1705"/>
<dbReference type="KEGG" id="cgl:Cgl1510"/>
<dbReference type="PATRIC" id="fig|196627.13.peg.1478"/>
<dbReference type="eggNOG" id="COG0798">
    <property type="taxonomic scope" value="Bacteria"/>
</dbReference>
<dbReference type="HOGENOM" id="CLU_022869_0_0_11"/>
<dbReference type="OrthoDB" id="3420410at2"/>
<dbReference type="BioCyc" id="MetaCyc:G18NG-11093-MONOMER"/>
<dbReference type="Proteomes" id="UP000000582">
    <property type="component" value="Chromosome"/>
</dbReference>
<dbReference type="Proteomes" id="UP000001009">
    <property type="component" value="Chromosome"/>
</dbReference>
<dbReference type="GO" id="GO:0005886">
    <property type="term" value="C:plasma membrane"/>
    <property type="evidence" value="ECO:0007669"/>
    <property type="project" value="UniProtKB-SubCell"/>
</dbReference>
<dbReference type="GO" id="GO:0015104">
    <property type="term" value="F:antimonite transmembrane transporter activity"/>
    <property type="evidence" value="ECO:0007669"/>
    <property type="project" value="TreeGrafter"/>
</dbReference>
<dbReference type="GO" id="GO:0015297">
    <property type="term" value="F:antiporter activity"/>
    <property type="evidence" value="ECO:0007669"/>
    <property type="project" value="InterPro"/>
</dbReference>
<dbReference type="GO" id="GO:0015105">
    <property type="term" value="F:arsenite transmembrane transporter activity"/>
    <property type="evidence" value="ECO:0007669"/>
    <property type="project" value="TreeGrafter"/>
</dbReference>
<dbReference type="GO" id="GO:0046685">
    <property type="term" value="P:response to arsenic-containing substance"/>
    <property type="evidence" value="ECO:0007669"/>
    <property type="project" value="UniProtKB-KW"/>
</dbReference>
<dbReference type="FunFam" id="1.20.1530.20:FF:000009">
    <property type="entry name" value="Arsenite transporter, ACR3 family"/>
    <property type="match status" value="1"/>
</dbReference>
<dbReference type="Gene3D" id="1.20.1530.20">
    <property type="match status" value="1"/>
</dbReference>
<dbReference type="InterPro" id="IPR004706">
    <property type="entry name" value="Arsenical-R_Acr3"/>
</dbReference>
<dbReference type="InterPro" id="IPR002657">
    <property type="entry name" value="BilAc:Na_symport/Acr3"/>
</dbReference>
<dbReference type="InterPro" id="IPR038770">
    <property type="entry name" value="Na+/solute_symporter_sf"/>
</dbReference>
<dbReference type="NCBIfam" id="TIGR00832">
    <property type="entry name" value="acr3"/>
    <property type="match status" value="1"/>
</dbReference>
<dbReference type="PANTHER" id="PTHR43057:SF1">
    <property type="entry name" value="ARSENICAL-RESISTANCE PROTEIN 3"/>
    <property type="match status" value="1"/>
</dbReference>
<dbReference type="PANTHER" id="PTHR43057">
    <property type="entry name" value="ARSENITE EFFLUX TRANSPORTER"/>
    <property type="match status" value="1"/>
</dbReference>
<dbReference type="Pfam" id="PF01758">
    <property type="entry name" value="SBF"/>
    <property type="match status" value="1"/>
</dbReference>
<dbReference type="PIRSF" id="PIRSF005508">
    <property type="entry name" value="Acr3"/>
    <property type="match status" value="1"/>
</dbReference>
<name>ACR3_CORGL</name>
<keyword id="KW-0059">Arsenical resistance</keyword>
<keyword id="KW-1003">Cell membrane</keyword>
<keyword id="KW-0472">Membrane</keyword>
<keyword id="KW-1185">Reference proteome</keyword>
<keyword id="KW-0812">Transmembrane</keyword>
<keyword id="KW-1133">Transmembrane helix</keyword>
<keyword id="KW-0813">Transport</keyword>